<proteinExistence type="inferred from homology"/>
<gene>
    <name evidence="1" type="primary">pyrD</name>
    <name type="ordered locus">Plav_0437</name>
</gene>
<sequence>MDLFPLARPLMSLMDPETAHGLTLRALRLGLGPTRRAPDPVSLAIDLFGLHFENPLGIAAGFDKNGEVPDAMLAMGMGFAEVGTVTPLPQPGNPRPRVFRLPVHRAVINRLGFNNQGHAALKKRLLARRKRPGILGVNIGANKDAADRIADYEAGIRAFEGLASYFTVNISSPNTPGLRALQNKAELQNLVARVLAARKGKTPVLLKIAPDLNAEELGDIAEVALEQGLDGLIVSNTTIAREGLVSGVNANETGGLSGAPLFPMSTAVLRDMYRLTGGRLPLVGVGGISSADDAYAKIRAGASLVQLYSALTYDGPPLVARIKQGLAARLAADGFAHLKDAVGADVNL</sequence>
<reference key="1">
    <citation type="journal article" date="2011" name="Stand. Genomic Sci.">
        <title>Complete genome sequence of Parvibaculum lavamentivorans type strain (DS-1(T)).</title>
        <authorList>
            <person name="Schleheck D."/>
            <person name="Weiss M."/>
            <person name="Pitluck S."/>
            <person name="Bruce D."/>
            <person name="Land M.L."/>
            <person name="Han S."/>
            <person name="Saunders E."/>
            <person name="Tapia R."/>
            <person name="Detter C."/>
            <person name="Brettin T."/>
            <person name="Han J."/>
            <person name="Woyke T."/>
            <person name="Goodwin L."/>
            <person name="Pennacchio L."/>
            <person name="Nolan M."/>
            <person name="Cook A.M."/>
            <person name="Kjelleberg S."/>
            <person name="Thomas T."/>
        </authorList>
    </citation>
    <scope>NUCLEOTIDE SEQUENCE [LARGE SCALE GENOMIC DNA]</scope>
    <source>
        <strain>DS-1 / DSM 13023 / NCIMB 13966</strain>
    </source>
</reference>
<name>PYRD_PARL1</name>
<protein>
    <recommendedName>
        <fullName evidence="1">Dihydroorotate dehydrogenase (quinone)</fullName>
        <ecNumber evidence="1">1.3.5.2</ecNumber>
    </recommendedName>
    <alternativeName>
        <fullName evidence="1">DHOdehase</fullName>
        <shortName evidence="1">DHOD</shortName>
        <shortName evidence="1">DHODase</shortName>
    </alternativeName>
    <alternativeName>
        <fullName evidence="1">Dihydroorotate oxidase</fullName>
    </alternativeName>
</protein>
<evidence type="ECO:0000255" key="1">
    <source>
        <dbReference type="HAMAP-Rule" id="MF_00225"/>
    </source>
</evidence>
<organism>
    <name type="scientific">Parvibaculum lavamentivorans (strain DS-1 / DSM 13023 / NCIMB 13966)</name>
    <dbReference type="NCBI Taxonomy" id="402881"/>
    <lineage>
        <taxon>Bacteria</taxon>
        <taxon>Pseudomonadati</taxon>
        <taxon>Pseudomonadota</taxon>
        <taxon>Alphaproteobacteria</taxon>
        <taxon>Hyphomicrobiales</taxon>
        <taxon>Parvibaculaceae</taxon>
        <taxon>Parvibaculum</taxon>
    </lineage>
</organism>
<accession>A7HQ77</accession>
<comment type="function">
    <text evidence="1">Catalyzes the conversion of dihydroorotate to orotate with quinone as electron acceptor.</text>
</comment>
<comment type="catalytic activity">
    <reaction evidence="1">
        <text>(S)-dihydroorotate + a quinone = orotate + a quinol</text>
        <dbReference type="Rhea" id="RHEA:30187"/>
        <dbReference type="ChEBI" id="CHEBI:24646"/>
        <dbReference type="ChEBI" id="CHEBI:30839"/>
        <dbReference type="ChEBI" id="CHEBI:30864"/>
        <dbReference type="ChEBI" id="CHEBI:132124"/>
        <dbReference type="EC" id="1.3.5.2"/>
    </reaction>
</comment>
<comment type="cofactor">
    <cofactor evidence="1">
        <name>FMN</name>
        <dbReference type="ChEBI" id="CHEBI:58210"/>
    </cofactor>
    <text evidence="1">Binds 1 FMN per subunit.</text>
</comment>
<comment type="pathway">
    <text evidence="1">Pyrimidine metabolism; UMP biosynthesis via de novo pathway; orotate from (S)-dihydroorotate (quinone route): step 1/1.</text>
</comment>
<comment type="subunit">
    <text evidence="1">Monomer.</text>
</comment>
<comment type="subcellular location">
    <subcellularLocation>
        <location evidence="1">Cell membrane</location>
        <topology evidence="1">Peripheral membrane protein</topology>
    </subcellularLocation>
</comment>
<comment type="similarity">
    <text evidence="1">Belongs to the dihydroorotate dehydrogenase family. Type 2 subfamily.</text>
</comment>
<keyword id="KW-1003">Cell membrane</keyword>
<keyword id="KW-0285">Flavoprotein</keyword>
<keyword id="KW-0288">FMN</keyword>
<keyword id="KW-0472">Membrane</keyword>
<keyword id="KW-0560">Oxidoreductase</keyword>
<keyword id="KW-0665">Pyrimidine biosynthesis</keyword>
<keyword id="KW-1185">Reference proteome</keyword>
<dbReference type="EC" id="1.3.5.2" evidence="1"/>
<dbReference type="EMBL" id="CP000774">
    <property type="protein sequence ID" value="ABS62060.1"/>
    <property type="molecule type" value="Genomic_DNA"/>
</dbReference>
<dbReference type="RefSeq" id="WP_011995351.1">
    <property type="nucleotide sequence ID" value="NC_009719.1"/>
</dbReference>
<dbReference type="SMR" id="A7HQ77"/>
<dbReference type="STRING" id="402881.Plav_0437"/>
<dbReference type="KEGG" id="pla:Plav_0437"/>
<dbReference type="eggNOG" id="COG0167">
    <property type="taxonomic scope" value="Bacteria"/>
</dbReference>
<dbReference type="HOGENOM" id="CLU_013640_2_1_5"/>
<dbReference type="OrthoDB" id="9802377at2"/>
<dbReference type="UniPathway" id="UPA00070">
    <property type="reaction ID" value="UER00946"/>
</dbReference>
<dbReference type="Proteomes" id="UP000006377">
    <property type="component" value="Chromosome"/>
</dbReference>
<dbReference type="GO" id="GO:0005737">
    <property type="term" value="C:cytoplasm"/>
    <property type="evidence" value="ECO:0007669"/>
    <property type="project" value="InterPro"/>
</dbReference>
<dbReference type="GO" id="GO:0005886">
    <property type="term" value="C:plasma membrane"/>
    <property type="evidence" value="ECO:0007669"/>
    <property type="project" value="UniProtKB-SubCell"/>
</dbReference>
<dbReference type="GO" id="GO:0106430">
    <property type="term" value="F:dihydroorotate dehydrogenase (quinone) activity"/>
    <property type="evidence" value="ECO:0007669"/>
    <property type="project" value="UniProtKB-EC"/>
</dbReference>
<dbReference type="GO" id="GO:0006207">
    <property type="term" value="P:'de novo' pyrimidine nucleobase biosynthetic process"/>
    <property type="evidence" value="ECO:0007669"/>
    <property type="project" value="InterPro"/>
</dbReference>
<dbReference type="GO" id="GO:0044205">
    <property type="term" value="P:'de novo' UMP biosynthetic process"/>
    <property type="evidence" value="ECO:0007669"/>
    <property type="project" value="UniProtKB-UniRule"/>
</dbReference>
<dbReference type="CDD" id="cd04738">
    <property type="entry name" value="DHOD_2_like"/>
    <property type="match status" value="1"/>
</dbReference>
<dbReference type="Gene3D" id="3.20.20.70">
    <property type="entry name" value="Aldolase class I"/>
    <property type="match status" value="1"/>
</dbReference>
<dbReference type="HAMAP" id="MF_00225">
    <property type="entry name" value="DHO_dh_type2"/>
    <property type="match status" value="1"/>
</dbReference>
<dbReference type="InterPro" id="IPR013785">
    <property type="entry name" value="Aldolase_TIM"/>
</dbReference>
<dbReference type="InterPro" id="IPR050074">
    <property type="entry name" value="DHO_dehydrogenase"/>
</dbReference>
<dbReference type="InterPro" id="IPR012135">
    <property type="entry name" value="Dihydroorotate_DH_1_2"/>
</dbReference>
<dbReference type="InterPro" id="IPR005719">
    <property type="entry name" value="Dihydroorotate_DH_2"/>
</dbReference>
<dbReference type="InterPro" id="IPR005720">
    <property type="entry name" value="Dihydroorotate_DH_cat"/>
</dbReference>
<dbReference type="InterPro" id="IPR001295">
    <property type="entry name" value="Dihydroorotate_DH_CS"/>
</dbReference>
<dbReference type="NCBIfam" id="NF003645">
    <property type="entry name" value="PRK05286.1-2"/>
    <property type="match status" value="1"/>
</dbReference>
<dbReference type="NCBIfam" id="NF003652">
    <property type="entry name" value="PRK05286.2-5"/>
    <property type="match status" value="1"/>
</dbReference>
<dbReference type="NCBIfam" id="TIGR01036">
    <property type="entry name" value="pyrD_sub2"/>
    <property type="match status" value="1"/>
</dbReference>
<dbReference type="PANTHER" id="PTHR48109:SF4">
    <property type="entry name" value="DIHYDROOROTATE DEHYDROGENASE (QUINONE), MITOCHONDRIAL"/>
    <property type="match status" value="1"/>
</dbReference>
<dbReference type="PANTHER" id="PTHR48109">
    <property type="entry name" value="DIHYDROOROTATE DEHYDROGENASE (QUINONE), MITOCHONDRIAL-RELATED"/>
    <property type="match status" value="1"/>
</dbReference>
<dbReference type="Pfam" id="PF01180">
    <property type="entry name" value="DHO_dh"/>
    <property type="match status" value="1"/>
</dbReference>
<dbReference type="PIRSF" id="PIRSF000164">
    <property type="entry name" value="DHO_oxidase"/>
    <property type="match status" value="1"/>
</dbReference>
<dbReference type="SUPFAM" id="SSF51395">
    <property type="entry name" value="FMN-linked oxidoreductases"/>
    <property type="match status" value="1"/>
</dbReference>
<dbReference type="PROSITE" id="PS00911">
    <property type="entry name" value="DHODEHASE_1"/>
    <property type="match status" value="1"/>
</dbReference>
<dbReference type="PROSITE" id="PS00912">
    <property type="entry name" value="DHODEHASE_2"/>
    <property type="match status" value="1"/>
</dbReference>
<feature type="chain" id="PRO_1000071767" description="Dihydroorotate dehydrogenase (quinone)">
    <location>
        <begin position="1"/>
        <end position="348"/>
    </location>
</feature>
<feature type="active site" description="Nucleophile" evidence="1">
    <location>
        <position position="172"/>
    </location>
</feature>
<feature type="binding site" evidence="1">
    <location>
        <begin position="60"/>
        <end position="64"/>
    </location>
    <ligand>
        <name>FMN</name>
        <dbReference type="ChEBI" id="CHEBI:58210"/>
    </ligand>
</feature>
<feature type="binding site" evidence="1">
    <location>
        <position position="64"/>
    </location>
    <ligand>
        <name>substrate</name>
    </ligand>
</feature>
<feature type="binding site" evidence="1">
    <location>
        <position position="84"/>
    </location>
    <ligand>
        <name>FMN</name>
        <dbReference type="ChEBI" id="CHEBI:58210"/>
    </ligand>
</feature>
<feature type="binding site" evidence="1">
    <location>
        <begin position="109"/>
        <end position="113"/>
    </location>
    <ligand>
        <name>substrate</name>
    </ligand>
</feature>
<feature type="binding site" evidence="1">
    <location>
        <position position="138"/>
    </location>
    <ligand>
        <name>FMN</name>
        <dbReference type="ChEBI" id="CHEBI:58210"/>
    </ligand>
</feature>
<feature type="binding site" evidence="1">
    <location>
        <position position="169"/>
    </location>
    <ligand>
        <name>FMN</name>
        <dbReference type="ChEBI" id="CHEBI:58210"/>
    </ligand>
</feature>
<feature type="binding site" evidence="1">
    <location>
        <position position="169"/>
    </location>
    <ligand>
        <name>substrate</name>
    </ligand>
</feature>
<feature type="binding site" evidence="1">
    <location>
        <position position="174"/>
    </location>
    <ligand>
        <name>substrate</name>
    </ligand>
</feature>
<feature type="binding site" evidence="1">
    <location>
        <position position="207"/>
    </location>
    <ligand>
        <name>FMN</name>
        <dbReference type="ChEBI" id="CHEBI:58210"/>
    </ligand>
</feature>
<feature type="binding site" evidence="1">
    <location>
        <position position="235"/>
    </location>
    <ligand>
        <name>FMN</name>
        <dbReference type="ChEBI" id="CHEBI:58210"/>
    </ligand>
</feature>
<feature type="binding site" evidence="1">
    <location>
        <begin position="236"/>
        <end position="237"/>
    </location>
    <ligand>
        <name>substrate</name>
    </ligand>
</feature>
<feature type="binding site" evidence="1">
    <location>
        <position position="258"/>
    </location>
    <ligand>
        <name>FMN</name>
        <dbReference type="ChEBI" id="CHEBI:58210"/>
    </ligand>
</feature>
<feature type="binding site" evidence="1">
    <location>
        <position position="287"/>
    </location>
    <ligand>
        <name>FMN</name>
        <dbReference type="ChEBI" id="CHEBI:58210"/>
    </ligand>
</feature>
<feature type="binding site" evidence="1">
    <location>
        <begin position="308"/>
        <end position="309"/>
    </location>
    <ligand>
        <name>FMN</name>
        <dbReference type="ChEBI" id="CHEBI:58210"/>
    </ligand>
</feature>